<feature type="chain" id="PRO_0000289161" description="CRACD-like protein">
    <location>
        <begin position="1"/>
        <end position="962"/>
    </location>
</feature>
<feature type="region of interest" description="Disordered" evidence="1">
    <location>
        <begin position="38"/>
        <end position="102"/>
    </location>
</feature>
<feature type="region of interest" description="Disordered" evidence="1">
    <location>
        <begin position="131"/>
        <end position="174"/>
    </location>
</feature>
<feature type="region of interest" description="Disordered" evidence="1">
    <location>
        <begin position="212"/>
        <end position="871"/>
    </location>
</feature>
<feature type="compositionally biased region" description="Polar residues" evidence="1">
    <location>
        <begin position="46"/>
        <end position="61"/>
    </location>
</feature>
<feature type="compositionally biased region" description="Basic residues" evidence="1">
    <location>
        <begin position="224"/>
        <end position="244"/>
    </location>
</feature>
<feature type="compositionally biased region" description="Polar residues" evidence="1">
    <location>
        <begin position="245"/>
        <end position="256"/>
    </location>
</feature>
<feature type="compositionally biased region" description="Basic and acidic residues" evidence="1">
    <location>
        <begin position="266"/>
        <end position="278"/>
    </location>
</feature>
<feature type="compositionally biased region" description="Pro residues" evidence="1">
    <location>
        <begin position="292"/>
        <end position="303"/>
    </location>
</feature>
<feature type="compositionally biased region" description="Pro residues" evidence="1">
    <location>
        <begin position="354"/>
        <end position="365"/>
    </location>
</feature>
<feature type="compositionally biased region" description="Low complexity" evidence="1">
    <location>
        <begin position="407"/>
        <end position="425"/>
    </location>
</feature>
<feature type="compositionally biased region" description="Basic and acidic residues" evidence="1">
    <location>
        <begin position="429"/>
        <end position="440"/>
    </location>
</feature>
<feature type="compositionally biased region" description="Basic and acidic residues" evidence="1">
    <location>
        <begin position="459"/>
        <end position="480"/>
    </location>
</feature>
<feature type="compositionally biased region" description="Low complexity" evidence="1">
    <location>
        <begin position="503"/>
        <end position="521"/>
    </location>
</feature>
<feature type="compositionally biased region" description="Basic and acidic residues" evidence="1">
    <location>
        <begin position="536"/>
        <end position="546"/>
    </location>
</feature>
<feature type="compositionally biased region" description="Basic and acidic residues" evidence="1">
    <location>
        <begin position="555"/>
        <end position="570"/>
    </location>
</feature>
<feature type="compositionally biased region" description="Basic and acidic residues" evidence="1">
    <location>
        <begin position="631"/>
        <end position="642"/>
    </location>
</feature>
<feature type="compositionally biased region" description="Basic and acidic residues" evidence="1">
    <location>
        <begin position="709"/>
        <end position="728"/>
    </location>
</feature>
<feature type="compositionally biased region" description="Pro residues" evidence="1">
    <location>
        <begin position="753"/>
        <end position="764"/>
    </location>
</feature>
<feature type="compositionally biased region" description="Basic and acidic residues" evidence="1">
    <location>
        <begin position="784"/>
        <end position="806"/>
    </location>
</feature>
<feature type="compositionally biased region" description="Basic and acidic residues" evidence="1">
    <location>
        <begin position="844"/>
        <end position="869"/>
    </location>
</feature>
<feature type="modified residue" description="Phosphoserine" evidence="4">
    <location>
        <position position="92"/>
    </location>
</feature>
<feature type="modified residue" description="Phosphoserine" evidence="4">
    <location>
        <position position="490"/>
    </location>
</feature>
<feature type="sequence variant" id="VAR_047335" description="In dbSNP:rs3731660.">
    <original>S</original>
    <variation>C</variation>
    <location>
        <position position="315"/>
    </location>
</feature>
<feature type="sequence conflict" description="In Ref. 2; AAH68277." evidence="2" ref="2">
    <original>P</original>
    <variation>T</variation>
    <location>
        <position position="509"/>
    </location>
</feature>
<name>CRCDL_HUMAN</name>
<comment type="sequence caution" evidence="2">
    <conflict type="frameshift">
        <sequence resource="EMBL-CDS" id="AAH68277"/>
    </conflict>
</comment>
<keyword id="KW-0597">Phosphoprotein</keyword>
<keyword id="KW-1267">Proteomics identification</keyword>
<keyword id="KW-1185">Reference proteome</keyword>
<organism>
    <name type="scientific">Homo sapiens</name>
    <name type="common">Human</name>
    <dbReference type="NCBI Taxonomy" id="9606"/>
    <lineage>
        <taxon>Eukaryota</taxon>
        <taxon>Metazoa</taxon>
        <taxon>Chordata</taxon>
        <taxon>Craniata</taxon>
        <taxon>Vertebrata</taxon>
        <taxon>Euteleostomi</taxon>
        <taxon>Mammalia</taxon>
        <taxon>Eutheria</taxon>
        <taxon>Euarchontoglires</taxon>
        <taxon>Primates</taxon>
        <taxon>Haplorrhini</taxon>
        <taxon>Catarrhini</taxon>
        <taxon>Hominidae</taxon>
        <taxon>Homo</taxon>
    </lineage>
</organism>
<protein>
    <recommendedName>
        <fullName evidence="2">CRACD-like protein</fullName>
    </recommendedName>
</protein>
<sequence>MISTRVMDIKLREAAEGLGEDSTGKKKSKFKTFKKFFGKKKRKESPSSTGSSTWKQSQTRNEVIAIESGPVGYDSEDELEESRGTLGSRALSHDSIFIPESGQDATRPVRVFSQENVCDRIKALQLKIQCNVKMGPPPPPGGLPAKRGEDAGMSSEDDGLPRSPPEMSLLHDVGPGTTIKVSVVSPDHVSDSTVSARISDNSLAPVADFSYPAESSSCLDNSAAKHKLQVKPRNQRSSKMRRLSSRAQSESLSDLTCTPEEEENEEKPLLEVSPEERPSSGQQDVAPDRGPEPGPPAPLPPPGGARARRARLQHSSALTASVEEGGVPGEDPSSRPATPELAEPESAPTLRVEPPSPPEGPPNPGPDGGKQDGEAPPAGPCAPATDKAEEVVCAPEDVASPFPTAIPEGDTTPPETDPAATSEAPSARDGPERSVPKEAEPTPPVLPDEEKGPPGPAPEPEREAETEPERGAGTEPERIGTEPSTAPAPSPPAPKSCLKHRPAAASEGPAASPPLAAAESPPVEPGPGSLDAEAAAPERPKAERAEAPPAGAERAAPERKAERGGAELRGAKKFSVSSCRARPRPGVSRPLERASGRLPLARSGPVWRSEAALDDLQGLPEPQHAKPGPRKLAERGPQDSGDRAASPAGPRKSPQEAAAAPGTREPCPAAQEPAPSEDRNPFPVKLRSTSLSLKYRDGASQEVKGVKRYSAEVRLERSLTVLPKEEKCPLGTAPALRGTRAPSDQGKGKARPPEPLSSKPPLPRKPLLQSFTLPHQPAPPDAGPGEREPRKEPRTAEKRPLRRGAEKSLPPAATGPGADGQPAPPWITVTRQKRRGTLDQPPNQEDKPGARTLKSEPGKQAKVPERGQEPVKQADFVRSKSFLITPVKPAVDRKQGAKLNFKEGLQRGISLSHQNLAQSAVMMEKELHQLKRASYASTDQPSWMELARKKSQAWSDMPQIIK</sequence>
<dbReference type="EMBL" id="AC084377">
    <property type="status" value="NOT_ANNOTATED_CDS"/>
    <property type="molecule type" value="Genomic_DNA"/>
</dbReference>
<dbReference type="EMBL" id="BC068277">
    <property type="protein sequence ID" value="AAH68277.1"/>
    <property type="status" value="ALT_FRAME"/>
    <property type="molecule type" value="mRNA"/>
</dbReference>
<dbReference type="CCDS" id="CCDS42720.1"/>
<dbReference type="RefSeq" id="NP_997245.2">
    <property type="nucleotide sequence ID" value="NM_207362.3"/>
</dbReference>
<dbReference type="SMR" id="Q6NV74"/>
<dbReference type="BioGRID" id="131284">
    <property type="interactions" value="8"/>
</dbReference>
<dbReference type="FunCoup" id="Q6NV74">
    <property type="interactions" value="100"/>
</dbReference>
<dbReference type="IntAct" id="Q6NV74">
    <property type="interactions" value="6"/>
</dbReference>
<dbReference type="STRING" id="9606.ENSP00000380996"/>
<dbReference type="GlyGen" id="Q6NV74">
    <property type="glycosylation" value="3 sites, 1 O-linked glycan (2 sites)"/>
</dbReference>
<dbReference type="iPTMnet" id="Q6NV74"/>
<dbReference type="PhosphoSitePlus" id="Q6NV74"/>
<dbReference type="SwissPalm" id="Q6NV74"/>
<dbReference type="BioMuta" id="KIAA1211L"/>
<dbReference type="DMDM" id="215274155"/>
<dbReference type="jPOST" id="Q6NV74"/>
<dbReference type="MassIVE" id="Q6NV74"/>
<dbReference type="PaxDb" id="9606-ENSP00000380996"/>
<dbReference type="PeptideAtlas" id="Q6NV74"/>
<dbReference type="ProteomicsDB" id="66714"/>
<dbReference type="Antibodypedia" id="47517">
    <property type="antibodies" value="61 antibodies from 14 providers"/>
</dbReference>
<dbReference type="DNASU" id="343990"/>
<dbReference type="Ensembl" id="ENST00000397899.7">
    <property type="protein sequence ID" value="ENSP00000380996.2"/>
    <property type="gene ID" value="ENSG00000196872.12"/>
</dbReference>
<dbReference type="GeneID" id="343990"/>
<dbReference type="KEGG" id="hsa:343990"/>
<dbReference type="MANE-Select" id="ENST00000397899.7">
    <property type="protein sequence ID" value="ENSP00000380996.2"/>
    <property type="RefSeq nucleotide sequence ID" value="NM_207362.3"/>
    <property type="RefSeq protein sequence ID" value="NP_997245.2"/>
</dbReference>
<dbReference type="UCSC" id="uc002szf.2">
    <property type="organism name" value="human"/>
</dbReference>
<dbReference type="AGR" id="HGNC:33454"/>
<dbReference type="CTD" id="343990"/>
<dbReference type="DisGeNET" id="343990"/>
<dbReference type="GeneCards" id="CRACDL"/>
<dbReference type="HGNC" id="HGNC:33454">
    <property type="gene designation" value="CRACDL"/>
</dbReference>
<dbReference type="HPA" id="ENSG00000196872">
    <property type="expression patterns" value="Tissue enhanced (brain, epididymis)"/>
</dbReference>
<dbReference type="neXtProt" id="NX_Q6NV74"/>
<dbReference type="OpenTargets" id="ENSG00000196872"/>
<dbReference type="PharmGKB" id="PA31767"/>
<dbReference type="VEuPathDB" id="HostDB:ENSG00000196872"/>
<dbReference type="eggNOG" id="ENOG502QSVM">
    <property type="taxonomic scope" value="Eukaryota"/>
</dbReference>
<dbReference type="GeneTree" id="ENSGT00940000161984"/>
<dbReference type="HOGENOM" id="CLU_311439_0_0_1"/>
<dbReference type="InParanoid" id="Q6NV74"/>
<dbReference type="OMA" id="CAPATDK"/>
<dbReference type="OrthoDB" id="9944945at2759"/>
<dbReference type="PAN-GO" id="Q6NV74">
    <property type="GO annotations" value="0 GO annotations based on evolutionary models"/>
</dbReference>
<dbReference type="PhylomeDB" id="Q6NV74"/>
<dbReference type="TreeFam" id="TF335584"/>
<dbReference type="PathwayCommons" id="Q6NV74"/>
<dbReference type="SignaLink" id="Q6NV74"/>
<dbReference type="BioGRID-ORCS" id="343990">
    <property type="hits" value="11 hits in 1141 CRISPR screens"/>
</dbReference>
<dbReference type="CD-CODE" id="FB4E32DD">
    <property type="entry name" value="Presynaptic clusters and postsynaptic densities"/>
</dbReference>
<dbReference type="ChiTaRS" id="KIAA1211L">
    <property type="organism name" value="human"/>
</dbReference>
<dbReference type="GenomeRNAi" id="343990"/>
<dbReference type="Pharos" id="Q6NV74">
    <property type="development level" value="Tdark"/>
</dbReference>
<dbReference type="PRO" id="PR:Q6NV74"/>
<dbReference type="Proteomes" id="UP000005640">
    <property type="component" value="Chromosome 2"/>
</dbReference>
<dbReference type="RNAct" id="Q6NV74">
    <property type="molecule type" value="protein"/>
</dbReference>
<dbReference type="Bgee" id="ENSG00000196872">
    <property type="expression patterns" value="Expressed in bronchial epithelial cell and 181 other cell types or tissues"/>
</dbReference>
<dbReference type="ExpressionAtlas" id="Q6NV74">
    <property type="expression patterns" value="baseline and differential"/>
</dbReference>
<dbReference type="InterPro" id="IPR026713">
    <property type="entry name" value="CRACD-like"/>
</dbReference>
<dbReference type="InterPro" id="IPR028030">
    <property type="entry name" value="DUF4592"/>
</dbReference>
<dbReference type="PANTHER" id="PTHR47743:SF1">
    <property type="entry name" value="CRACD-LIKE PROTEIN"/>
    <property type="match status" value="1"/>
</dbReference>
<dbReference type="PANTHER" id="PTHR47743">
    <property type="entry name" value="KIAA1210 / KIAA1211 FAMILY MEMBER"/>
    <property type="match status" value="1"/>
</dbReference>
<dbReference type="Pfam" id="PF15262">
    <property type="entry name" value="DUF4592"/>
    <property type="match status" value="1"/>
</dbReference>
<accession>Q6NV74</accession>
<gene>
    <name evidence="3" type="primary">CRACDL</name>
    <name evidence="3" type="synonym">C2orf55</name>
    <name evidence="3" type="synonym">KIAA1211L</name>
</gene>
<evidence type="ECO:0000256" key="1">
    <source>
        <dbReference type="SAM" id="MobiDB-lite"/>
    </source>
</evidence>
<evidence type="ECO:0000305" key="2"/>
<evidence type="ECO:0000312" key="3">
    <source>
        <dbReference type="HGNC" id="HGNC:33454"/>
    </source>
</evidence>
<evidence type="ECO:0007744" key="4">
    <source>
    </source>
</evidence>
<proteinExistence type="evidence at protein level"/>
<reference key="1">
    <citation type="journal article" date="2005" name="Nature">
        <title>Generation and annotation of the DNA sequences of human chromosomes 2 and 4.</title>
        <authorList>
            <person name="Hillier L.W."/>
            <person name="Graves T.A."/>
            <person name="Fulton R.S."/>
            <person name="Fulton L.A."/>
            <person name="Pepin K.H."/>
            <person name="Minx P."/>
            <person name="Wagner-McPherson C."/>
            <person name="Layman D."/>
            <person name="Wylie K."/>
            <person name="Sekhon M."/>
            <person name="Becker M.C."/>
            <person name="Fewell G.A."/>
            <person name="Delehaunty K.D."/>
            <person name="Miner T.L."/>
            <person name="Nash W.E."/>
            <person name="Kremitzki C."/>
            <person name="Oddy L."/>
            <person name="Du H."/>
            <person name="Sun H."/>
            <person name="Bradshaw-Cordum H."/>
            <person name="Ali J."/>
            <person name="Carter J."/>
            <person name="Cordes M."/>
            <person name="Harris A."/>
            <person name="Isak A."/>
            <person name="van Brunt A."/>
            <person name="Nguyen C."/>
            <person name="Du F."/>
            <person name="Courtney L."/>
            <person name="Kalicki J."/>
            <person name="Ozersky P."/>
            <person name="Abbott S."/>
            <person name="Armstrong J."/>
            <person name="Belter E.A."/>
            <person name="Caruso L."/>
            <person name="Cedroni M."/>
            <person name="Cotton M."/>
            <person name="Davidson T."/>
            <person name="Desai A."/>
            <person name="Elliott G."/>
            <person name="Erb T."/>
            <person name="Fronick C."/>
            <person name="Gaige T."/>
            <person name="Haakenson W."/>
            <person name="Haglund K."/>
            <person name="Holmes A."/>
            <person name="Harkins R."/>
            <person name="Kim K."/>
            <person name="Kruchowski S.S."/>
            <person name="Strong C.M."/>
            <person name="Grewal N."/>
            <person name="Goyea E."/>
            <person name="Hou S."/>
            <person name="Levy A."/>
            <person name="Martinka S."/>
            <person name="Mead K."/>
            <person name="McLellan M.D."/>
            <person name="Meyer R."/>
            <person name="Randall-Maher J."/>
            <person name="Tomlinson C."/>
            <person name="Dauphin-Kohlberg S."/>
            <person name="Kozlowicz-Reilly A."/>
            <person name="Shah N."/>
            <person name="Swearengen-Shahid S."/>
            <person name="Snider J."/>
            <person name="Strong J.T."/>
            <person name="Thompson J."/>
            <person name="Yoakum M."/>
            <person name="Leonard S."/>
            <person name="Pearman C."/>
            <person name="Trani L."/>
            <person name="Radionenko M."/>
            <person name="Waligorski J.E."/>
            <person name="Wang C."/>
            <person name="Rock S.M."/>
            <person name="Tin-Wollam A.-M."/>
            <person name="Maupin R."/>
            <person name="Latreille P."/>
            <person name="Wendl M.C."/>
            <person name="Yang S.-P."/>
            <person name="Pohl C."/>
            <person name="Wallis J.W."/>
            <person name="Spieth J."/>
            <person name="Bieri T.A."/>
            <person name="Berkowicz N."/>
            <person name="Nelson J.O."/>
            <person name="Osborne J."/>
            <person name="Ding L."/>
            <person name="Meyer R."/>
            <person name="Sabo A."/>
            <person name="Shotland Y."/>
            <person name="Sinha P."/>
            <person name="Wohldmann P.E."/>
            <person name="Cook L.L."/>
            <person name="Hickenbotham M.T."/>
            <person name="Eldred J."/>
            <person name="Williams D."/>
            <person name="Jones T.A."/>
            <person name="She X."/>
            <person name="Ciccarelli F.D."/>
            <person name="Izaurralde E."/>
            <person name="Taylor J."/>
            <person name="Schmutz J."/>
            <person name="Myers R.M."/>
            <person name="Cox D.R."/>
            <person name="Huang X."/>
            <person name="McPherson J.D."/>
            <person name="Mardis E.R."/>
            <person name="Clifton S.W."/>
            <person name="Warren W.C."/>
            <person name="Chinwalla A.T."/>
            <person name="Eddy S.R."/>
            <person name="Marra M.A."/>
            <person name="Ovcharenko I."/>
            <person name="Furey T.S."/>
            <person name="Miller W."/>
            <person name="Eichler E.E."/>
            <person name="Bork P."/>
            <person name="Suyama M."/>
            <person name="Torrents D."/>
            <person name="Waterston R.H."/>
            <person name="Wilson R.K."/>
        </authorList>
    </citation>
    <scope>NUCLEOTIDE SEQUENCE [LARGE SCALE GENOMIC DNA]</scope>
</reference>
<reference key="2">
    <citation type="journal article" date="2004" name="Genome Res.">
        <title>The status, quality, and expansion of the NIH full-length cDNA project: the Mammalian Gene Collection (MGC).</title>
        <authorList>
            <consortium name="The MGC Project Team"/>
        </authorList>
    </citation>
    <scope>NUCLEOTIDE SEQUENCE [LARGE SCALE MRNA]</scope>
    <source>
        <tissue>Brain</tissue>
    </source>
</reference>
<reference key="3">
    <citation type="journal article" date="2013" name="J. Proteome Res.">
        <title>Toward a comprehensive characterization of a human cancer cell phosphoproteome.</title>
        <authorList>
            <person name="Zhou H."/>
            <person name="Di Palma S."/>
            <person name="Preisinger C."/>
            <person name="Peng M."/>
            <person name="Polat A.N."/>
            <person name="Heck A.J."/>
            <person name="Mohammed S."/>
        </authorList>
    </citation>
    <scope>PHOSPHORYLATION [LARGE SCALE ANALYSIS] AT SER-92 AND SER-490</scope>
    <scope>IDENTIFICATION BY MASS SPECTROMETRY [LARGE SCALE ANALYSIS]</scope>
    <source>
        <tissue>Cervix carcinoma</tissue>
    </source>
</reference>